<accession>P52328</accession>
<feature type="chain" id="PRO_0000093875" description="RNA polymerase sigma factor SigA">
    <location>
        <begin position="1"/>
        <end position="377"/>
    </location>
</feature>
<feature type="DNA-binding region" description="H-T-H motif" evidence="1">
    <location>
        <begin position="338"/>
        <end position="357"/>
    </location>
</feature>
<feature type="region of interest" description="Disordered" evidence="2">
    <location>
        <begin position="72"/>
        <end position="92"/>
    </location>
</feature>
<feature type="region of interest" description="Sigma-70 factor domain-2" evidence="1">
    <location>
        <begin position="144"/>
        <end position="214"/>
    </location>
</feature>
<feature type="region of interest" description="Sigma-70 factor domain-3" evidence="1">
    <location>
        <begin position="223"/>
        <end position="299"/>
    </location>
</feature>
<feature type="region of interest" description="Sigma-70 factor domain-4" evidence="1">
    <location>
        <begin position="312"/>
        <end position="365"/>
    </location>
</feature>
<feature type="short sequence motif" description="Interaction with polymerase core subunit RpoC">
    <location>
        <begin position="168"/>
        <end position="171"/>
    </location>
</feature>
<evidence type="ECO:0000255" key="1">
    <source>
        <dbReference type="HAMAP-Rule" id="MF_00963"/>
    </source>
</evidence>
<evidence type="ECO:0000256" key="2">
    <source>
        <dbReference type="SAM" id="MobiDB-lite"/>
    </source>
</evidence>
<evidence type="ECO:0000305" key="3"/>
<comment type="function">
    <text evidence="1">Sigma factors are initiation factors that promote the attachment of RNA polymerase to specific initiation sites and are then released. This sigma factor is the primary sigma factor during exponential growth.</text>
</comment>
<comment type="subunit">
    <text evidence="1">Interacts transiently with the RNA polymerase catalytic core.</text>
</comment>
<comment type="subcellular location">
    <subcellularLocation>
        <location evidence="1">Cytoplasm</location>
    </subcellularLocation>
</comment>
<comment type="similarity">
    <text evidence="1">Belongs to the sigma-70 factor family. RpoD/SigA subfamily.</text>
</comment>
<comment type="caution">
    <text evidence="3">Was originally (Ref.1) thought to originate from Leptospira interrogans serovar copenhageni, but is most probably from a Bacillus species.</text>
</comment>
<proteinExistence type="inferred from homology"/>
<dbReference type="EMBL" id="M96579">
    <property type="protein sequence ID" value="AAA25264.1"/>
    <property type="molecule type" value="Genomic_DNA"/>
</dbReference>
<dbReference type="SMR" id="P52328"/>
<dbReference type="GO" id="GO:0005737">
    <property type="term" value="C:cytoplasm"/>
    <property type="evidence" value="ECO:0007669"/>
    <property type="project" value="UniProtKB-SubCell"/>
</dbReference>
<dbReference type="GO" id="GO:0003677">
    <property type="term" value="F:DNA binding"/>
    <property type="evidence" value="ECO:0007669"/>
    <property type="project" value="UniProtKB-UniRule"/>
</dbReference>
<dbReference type="GO" id="GO:0016987">
    <property type="term" value="F:sigma factor activity"/>
    <property type="evidence" value="ECO:0007669"/>
    <property type="project" value="UniProtKB-UniRule"/>
</dbReference>
<dbReference type="GO" id="GO:0006352">
    <property type="term" value="P:DNA-templated transcription initiation"/>
    <property type="evidence" value="ECO:0007669"/>
    <property type="project" value="UniProtKB-UniRule"/>
</dbReference>
<dbReference type="CDD" id="cd06171">
    <property type="entry name" value="Sigma70_r4"/>
    <property type="match status" value="1"/>
</dbReference>
<dbReference type="FunFam" id="1.10.10.10:FF:000002">
    <property type="entry name" value="RNA polymerase sigma factor SigA"/>
    <property type="match status" value="1"/>
</dbReference>
<dbReference type="FunFam" id="1.10.10.10:FF:000004">
    <property type="entry name" value="RNA polymerase sigma factor SigA"/>
    <property type="match status" value="1"/>
</dbReference>
<dbReference type="FunFam" id="1.10.601.10:FF:000001">
    <property type="entry name" value="RNA polymerase sigma factor SigA"/>
    <property type="match status" value="1"/>
</dbReference>
<dbReference type="Gene3D" id="1.10.601.10">
    <property type="entry name" value="RNA Polymerase Primary Sigma Factor"/>
    <property type="match status" value="2"/>
</dbReference>
<dbReference type="Gene3D" id="1.10.220.120">
    <property type="entry name" value="Sigma-70 factor, region 1.1"/>
    <property type="match status" value="1"/>
</dbReference>
<dbReference type="Gene3D" id="1.10.10.10">
    <property type="entry name" value="Winged helix-like DNA-binding domain superfamily/Winged helix DNA-binding domain"/>
    <property type="match status" value="2"/>
</dbReference>
<dbReference type="HAMAP" id="MF_00963">
    <property type="entry name" value="Sigma70_RpoD_SigA"/>
    <property type="match status" value="1"/>
</dbReference>
<dbReference type="InterPro" id="IPR014284">
    <property type="entry name" value="RNA_pol_sigma-70_dom"/>
</dbReference>
<dbReference type="InterPro" id="IPR000943">
    <property type="entry name" value="RNA_pol_sigma70"/>
</dbReference>
<dbReference type="InterPro" id="IPR009042">
    <property type="entry name" value="RNA_pol_sigma70_r1_2"/>
</dbReference>
<dbReference type="InterPro" id="IPR007627">
    <property type="entry name" value="RNA_pol_sigma70_r2"/>
</dbReference>
<dbReference type="InterPro" id="IPR007624">
    <property type="entry name" value="RNA_pol_sigma70_r3"/>
</dbReference>
<dbReference type="InterPro" id="IPR007630">
    <property type="entry name" value="RNA_pol_sigma70_r4"/>
</dbReference>
<dbReference type="InterPro" id="IPR007127">
    <property type="entry name" value="RNA_pol_sigma_70_r1_1"/>
</dbReference>
<dbReference type="InterPro" id="IPR042189">
    <property type="entry name" value="RNA_pol_sigma_70_r1_1_sf"/>
</dbReference>
<dbReference type="InterPro" id="IPR013325">
    <property type="entry name" value="RNA_pol_sigma_r2"/>
</dbReference>
<dbReference type="InterPro" id="IPR013324">
    <property type="entry name" value="RNA_pol_sigma_r3/r4-like"/>
</dbReference>
<dbReference type="InterPro" id="IPR012760">
    <property type="entry name" value="RNA_pol_sigma_RpoD_C"/>
</dbReference>
<dbReference type="InterPro" id="IPR050239">
    <property type="entry name" value="Sigma-70_RNA_pol_init_factors"/>
</dbReference>
<dbReference type="InterPro" id="IPR028630">
    <property type="entry name" value="Sigma70_RpoD"/>
</dbReference>
<dbReference type="InterPro" id="IPR036388">
    <property type="entry name" value="WH-like_DNA-bd_sf"/>
</dbReference>
<dbReference type="NCBIfam" id="NF006666">
    <property type="entry name" value="PRK09210.1"/>
    <property type="match status" value="1"/>
</dbReference>
<dbReference type="NCBIfam" id="TIGR02393">
    <property type="entry name" value="RpoD_Cterm"/>
    <property type="match status" value="1"/>
</dbReference>
<dbReference type="NCBIfam" id="TIGR02937">
    <property type="entry name" value="sigma70-ECF"/>
    <property type="match status" value="1"/>
</dbReference>
<dbReference type="PANTHER" id="PTHR30603">
    <property type="entry name" value="RNA POLYMERASE SIGMA FACTOR RPO"/>
    <property type="match status" value="1"/>
</dbReference>
<dbReference type="PANTHER" id="PTHR30603:SF60">
    <property type="entry name" value="RNA POLYMERASE SIGMA FACTOR RPOD"/>
    <property type="match status" value="1"/>
</dbReference>
<dbReference type="Pfam" id="PF03979">
    <property type="entry name" value="Sigma70_r1_1"/>
    <property type="match status" value="1"/>
</dbReference>
<dbReference type="Pfam" id="PF00140">
    <property type="entry name" value="Sigma70_r1_2"/>
    <property type="match status" value="1"/>
</dbReference>
<dbReference type="Pfam" id="PF04542">
    <property type="entry name" value="Sigma70_r2"/>
    <property type="match status" value="1"/>
</dbReference>
<dbReference type="Pfam" id="PF04539">
    <property type="entry name" value="Sigma70_r3"/>
    <property type="match status" value="1"/>
</dbReference>
<dbReference type="Pfam" id="PF04545">
    <property type="entry name" value="Sigma70_r4"/>
    <property type="match status" value="1"/>
</dbReference>
<dbReference type="PRINTS" id="PR00046">
    <property type="entry name" value="SIGMA70FCT"/>
</dbReference>
<dbReference type="SUPFAM" id="SSF88946">
    <property type="entry name" value="Sigma2 domain of RNA polymerase sigma factors"/>
    <property type="match status" value="1"/>
</dbReference>
<dbReference type="SUPFAM" id="SSF88659">
    <property type="entry name" value="Sigma3 and sigma4 domains of RNA polymerase sigma factors"/>
    <property type="match status" value="2"/>
</dbReference>
<dbReference type="PROSITE" id="PS00715">
    <property type="entry name" value="SIGMA70_1"/>
    <property type="match status" value="1"/>
</dbReference>
<dbReference type="PROSITE" id="PS00716">
    <property type="entry name" value="SIGMA70_2"/>
    <property type="match status" value="1"/>
</dbReference>
<protein>
    <recommendedName>
        <fullName evidence="1">RNA polymerase sigma factor SigA</fullName>
    </recommendedName>
    <alternativeName>
        <fullName>Sigma-A</fullName>
    </alternativeName>
</protein>
<organism>
    <name type="scientific">Bacillus sp</name>
    <dbReference type="NCBI Taxonomy" id="1409"/>
    <lineage>
        <taxon>Bacteria</taxon>
        <taxon>Bacillati</taxon>
        <taxon>Bacillota</taxon>
        <taxon>Bacilli</taxon>
        <taxon>Bacillales</taxon>
        <taxon>Bacillaceae</taxon>
        <taxon>Bacillus</taxon>
    </lineage>
</organism>
<keyword id="KW-0963">Cytoplasm</keyword>
<keyword id="KW-0238">DNA-binding</keyword>
<keyword id="KW-0731">Sigma factor</keyword>
<keyword id="KW-0804">Transcription</keyword>
<keyword id="KW-0805">Transcription regulation</keyword>
<reference key="1">
    <citation type="submission" date="1992-07" db="EMBL/GenBank/DDBJ databases">
        <title>Cloning and characterization of the sigma factor gene from Leptospira interrogans serovar copenhageni.</title>
        <authorList>
            <person name="Hsieh W.-J.J."/>
        </authorList>
    </citation>
    <scope>NUCLEOTIDE SEQUENCE [GENOMIC DNA]</scope>
</reference>
<name>SIGA_BACSP</name>
<sequence>MANDQHTELETEFTLDQVKDQLIEQGKKRSSLNYKDIMEKLSPFDQDPEQMDEFYEHLGDLGIEVVNENDEEVSNLRQGEDHDGNDNDDFNFDDDLSLPPGIKINDPVRMYLKEIGRVPLLSADDEVELAKRIMNGDEEAKRRLAEANLRLVVSIAKRYVGRGMLFLDLIQEGNMGLIKAVEKFDHNKGFKFSTYATWWIRQAITRAIADQARTIRIPVHMVETINKLIRVSRQLLQELGREPTPEEIAAEMELSVEKVREIMKIAQEPVSLETPIGEEDDSHLGDFIEDQEALTPADAAAYELLKEQLEDVLDTLTEREENVLRLRFGLDDGRTRTLEEVGKVFGVTRERIRQIEAKALRKLRHPSRSKRLKDFLE</sequence>
<gene>
    <name evidence="1" type="primary">sigA</name>
    <name type="synonym">rpoD</name>
</gene>